<feature type="chain" id="PRO_0000082864" description="Peptide deformylase">
    <location>
        <begin position="1"/>
        <end position="201"/>
    </location>
</feature>
<feature type="active site" evidence="1">
    <location>
        <position position="164"/>
    </location>
</feature>
<feature type="binding site" evidence="1">
    <location>
        <position position="121"/>
    </location>
    <ligand>
        <name>Fe cation</name>
        <dbReference type="ChEBI" id="CHEBI:24875"/>
    </ligand>
</feature>
<feature type="binding site" evidence="1">
    <location>
        <position position="163"/>
    </location>
    <ligand>
        <name>Fe cation</name>
        <dbReference type="ChEBI" id="CHEBI:24875"/>
    </ligand>
</feature>
<feature type="binding site" evidence="1">
    <location>
        <position position="167"/>
    </location>
    <ligand>
        <name>Fe cation</name>
        <dbReference type="ChEBI" id="CHEBI:24875"/>
    </ligand>
</feature>
<dbReference type="EC" id="3.5.1.88" evidence="1"/>
<dbReference type="EMBL" id="BX569689">
    <property type="protein sequence ID" value="CAE06839.1"/>
    <property type="molecule type" value="Genomic_DNA"/>
</dbReference>
<dbReference type="RefSeq" id="WP_011127198.1">
    <property type="nucleotide sequence ID" value="NC_005070.1"/>
</dbReference>
<dbReference type="SMR" id="Q7U9D4"/>
<dbReference type="STRING" id="84588.SYNW0324"/>
<dbReference type="KEGG" id="syw:SYNW0324"/>
<dbReference type="eggNOG" id="COG0242">
    <property type="taxonomic scope" value="Bacteria"/>
</dbReference>
<dbReference type="HOGENOM" id="CLU_061901_4_2_3"/>
<dbReference type="Proteomes" id="UP000001422">
    <property type="component" value="Chromosome"/>
</dbReference>
<dbReference type="GO" id="GO:0046872">
    <property type="term" value="F:metal ion binding"/>
    <property type="evidence" value="ECO:0007669"/>
    <property type="project" value="UniProtKB-KW"/>
</dbReference>
<dbReference type="GO" id="GO:0042586">
    <property type="term" value="F:peptide deformylase activity"/>
    <property type="evidence" value="ECO:0007669"/>
    <property type="project" value="UniProtKB-UniRule"/>
</dbReference>
<dbReference type="GO" id="GO:0043686">
    <property type="term" value="P:co-translational protein modification"/>
    <property type="evidence" value="ECO:0007669"/>
    <property type="project" value="TreeGrafter"/>
</dbReference>
<dbReference type="GO" id="GO:0006412">
    <property type="term" value="P:translation"/>
    <property type="evidence" value="ECO:0007669"/>
    <property type="project" value="UniProtKB-UniRule"/>
</dbReference>
<dbReference type="CDD" id="cd00487">
    <property type="entry name" value="Pep_deformylase"/>
    <property type="match status" value="1"/>
</dbReference>
<dbReference type="Gene3D" id="3.90.45.10">
    <property type="entry name" value="Peptide deformylase"/>
    <property type="match status" value="1"/>
</dbReference>
<dbReference type="HAMAP" id="MF_00163">
    <property type="entry name" value="Pep_deformylase"/>
    <property type="match status" value="1"/>
</dbReference>
<dbReference type="InterPro" id="IPR023635">
    <property type="entry name" value="Peptide_deformylase"/>
</dbReference>
<dbReference type="InterPro" id="IPR036821">
    <property type="entry name" value="Peptide_deformylase_sf"/>
</dbReference>
<dbReference type="NCBIfam" id="TIGR00079">
    <property type="entry name" value="pept_deformyl"/>
    <property type="match status" value="1"/>
</dbReference>
<dbReference type="NCBIfam" id="NF001159">
    <property type="entry name" value="PRK00150.1-3"/>
    <property type="match status" value="1"/>
</dbReference>
<dbReference type="PANTHER" id="PTHR10458">
    <property type="entry name" value="PEPTIDE DEFORMYLASE"/>
    <property type="match status" value="1"/>
</dbReference>
<dbReference type="PANTHER" id="PTHR10458:SF22">
    <property type="entry name" value="PEPTIDE DEFORMYLASE"/>
    <property type="match status" value="1"/>
</dbReference>
<dbReference type="Pfam" id="PF01327">
    <property type="entry name" value="Pep_deformylase"/>
    <property type="match status" value="1"/>
</dbReference>
<dbReference type="PIRSF" id="PIRSF004749">
    <property type="entry name" value="Pep_def"/>
    <property type="match status" value="1"/>
</dbReference>
<dbReference type="PRINTS" id="PR01576">
    <property type="entry name" value="PDEFORMYLASE"/>
</dbReference>
<dbReference type="SUPFAM" id="SSF56420">
    <property type="entry name" value="Peptide deformylase"/>
    <property type="match status" value="1"/>
</dbReference>
<organism>
    <name type="scientific">Parasynechococcus marenigrum (strain WH8102)</name>
    <dbReference type="NCBI Taxonomy" id="84588"/>
    <lineage>
        <taxon>Bacteria</taxon>
        <taxon>Bacillati</taxon>
        <taxon>Cyanobacteriota</taxon>
        <taxon>Cyanophyceae</taxon>
        <taxon>Synechococcales</taxon>
        <taxon>Prochlorococcaceae</taxon>
        <taxon>Parasynechococcus</taxon>
        <taxon>Parasynechococcus marenigrum</taxon>
    </lineage>
</organism>
<comment type="function">
    <text evidence="1">Removes the formyl group from the N-terminal Met of newly synthesized proteins. Requires at least a dipeptide for an efficient rate of reaction. N-terminal L-methionine is a prerequisite for activity but the enzyme has broad specificity at other positions.</text>
</comment>
<comment type="catalytic activity">
    <reaction evidence="1">
        <text>N-terminal N-formyl-L-methionyl-[peptide] + H2O = N-terminal L-methionyl-[peptide] + formate</text>
        <dbReference type="Rhea" id="RHEA:24420"/>
        <dbReference type="Rhea" id="RHEA-COMP:10639"/>
        <dbReference type="Rhea" id="RHEA-COMP:10640"/>
        <dbReference type="ChEBI" id="CHEBI:15377"/>
        <dbReference type="ChEBI" id="CHEBI:15740"/>
        <dbReference type="ChEBI" id="CHEBI:49298"/>
        <dbReference type="ChEBI" id="CHEBI:64731"/>
        <dbReference type="EC" id="3.5.1.88"/>
    </reaction>
</comment>
<comment type="cofactor">
    <cofactor evidence="1">
        <name>Fe(2+)</name>
        <dbReference type="ChEBI" id="CHEBI:29033"/>
    </cofactor>
    <text evidence="1">Binds 1 Fe(2+) ion.</text>
</comment>
<comment type="similarity">
    <text evidence="1">Belongs to the polypeptide deformylase family.</text>
</comment>
<gene>
    <name evidence="1" type="primary">def</name>
    <name type="ordered locus">SYNW0324</name>
</gene>
<proteinExistence type="inferred from homology"/>
<keyword id="KW-0378">Hydrolase</keyword>
<keyword id="KW-0408">Iron</keyword>
<keyword id="KW-0479">Metal-binding</keyword>
<keyword id="KW-0648">Protein biosynthesis</keyword>
<accession>Q7U9D4</accession>
<name>DEF_PARMW</name>
<sequence>MAGSFAQLARAAEQSRDTMLVPKTALETPPLEIHTLGAEVLRQSARRIGKVTEQTRELARDMLRSMYTAKGIGLAAPQVGIHQQLLVIDLDLENAATPPLVLINPEISAASASIDTYEEGCLSIPGVYLDVVRPTAIELSFRDEMGRPRKMKADGLMARCIQHEMDHLNGVLFVDRVTDEAGLQKELKDHGFQRQHVQSVS</sequence>
<reference key="1">
    <citation type="journal article" date="2003" name="Nature">
        <title>The genome of a motile marine Synechococcus.</title>
        <authorList>
            <person name="Palenik B."/>
            <person name="Brahamsha B."/>
            <person name="Larimer F.W."/>
            <person name="Land M.L."/>
            <person name="Hauser L."/>
            <person name="Chain P."/>
            <person name="Lamerdin J.E."/>
            <person name="Regala W."/>
            <person name="Allen E.E."/>
            <person name="McCarren J."/>
            <person name="Paulsen I.T."/>
            <person name="Dufresne A."/>
            <person name="Partensky F."/>
            <person name="Webb E.A."/>
            <person name="Waterbury J."/>
        </authorList>
    </citation>
    <scope>NUCLEOTIDE SEQUENCE [LARGE SCALE GENOMIC DNA]</scope>
    <source>
        <strain>WH8102</strain>
    </source>
</reference>
<protein>
    <recommendedName>
        <fullName evidence="1">Peptide deformylase</fullName>
        <shortName evidence="1">PDF</shortName>
        <ecNumber evidence="1">3.5.1.88</ecNumber>
    </recommendedName>
    <alternativeName>
        <fullName evidence="1">Polypeptide deformylase</fullName>
    </alternativeName>
</protein>
<evidence type="ECO:0000255" key="1">
    <source>
        <dbReference type="HAMAP-Rule" id="MF_00163"/>
    </source>
</evidence>